<keyword id="KW-0025">Alternative splicing</keyword>
<keyword id="KW-0150">Chloroplast</keyword>
<keyword id="KW-0934">Plastid</keyword>
<keyword id="KW-1185">Reference proteome</keyword>
<keyword id="KW-0809">Transit peptide</keyword>
<evidence type="ECO:0000255" key="1"/>
<evidence type="ECO:0000256" key="2">
    <source>
        <dbReference type="SAM" id="MobiDB-lite"/>
    </source>
</evidence>
<evidence type="ECO:0000269" key="3">
    <source>
    </source>
</evidence>
<evidence type="ECO:0000269" key="4">
    <source>
    </source>
</evidence>
<evidence type="ECO:0000269" key="5">
    <source>
    </source>
</evidence>
<evidence type="ECO:0000305" key="6"/>
<evidence type="ECO:0000312" key="7">
    <source>
        <dbReference type="EMBL" id="AAM20406.1"/>
    </source>
</evidence>
<evidence type="ECO:0000312" key="8">
    <source>
        <dbReference type="EMBL" id="BAB02703.1"/>
    </source>
</evidence>
<evidence type="ECO:0000312" key="9">
    <source>
        <dbReference type="Proteomes" id="UP000006548"/>
    </source>
</evidence>
<gene>
    <name evidence="7" type="ordered locus">At3g17800</name>
    <name evidence="8" type="ORF">MEB5.2</name>
</gene>
<feature type="transit peptide" description="Chloroplast" evidence="1">
    <location>
        <begin position="1"/>
        <end position="75"/>
    </location>
</feature>
<feature type="chain" id="PRO_0000434535" description="UV-B-induced protein At3g17800, chloroplastic">
    <location>
        <begin position="76"/>
        <end position="421"/>
    </location>
</feature>
<feature type="region of interest" description="Disordered" evidence="2">
    <location>
        <begin position="1"/>
        <end position="40"/>
    </location>
</feature>
<feature type="region of interest" description="Disordered" evidence="2">
    <location>
        <begin position="74"/>
        <end position="95"/>
    </location>
</feature>
<feature type="compositionally biased region" description="Polar residues" evidence="2">
    <location>
        <begin position="16"/>
        <end position="28"/>
    </location>
</feature>
<feature type="compositionally biased region" description="Low complexity" evidence="2">
    <location>
        <begin position="74"/>
        <end position="88"/>
    </location>
</feature>
<feature type="splice variant" id="VSP_057944" description="In isoform 2.">
    <original>R</original>
    <variation>RVCPKSL</variation>
    <location>
        <position position="48"/>
    </location>
</feature>
<feature type="sequence conflict" description="In Ref. 3; AAL32564/AAM13275." evidence="6" ref="3">
    <original>R</original>
    <variation>K</variation>
    <location>
        <position position="48"/>
    </location>
</feature>
<feature type="sequence conflict" description="In Ref. 4; BAF01343." evidence="6" ref="4">
    <original>T</original>
    <variation>A</variation>
    <location>
        <position position="63"/>
    </location>
</feature>
<protein>
    <recommendedName>
        <fullName evidence="6">UV-B-induced protein At3g17800, chloroplastic</fullName>
    </recommendedName>
</protein>
<name>UVB31_ARATH</name>
<dbReference type="EMBL" id="AB019230">
    <property type="protein sequence ID" value="BAB02703.1"/>
    <property type="molecule type" value="Genomic_DNA"/>
</dbReference>
<dbReference type="EMBL" id="CP002686">
    <property type="protein sequence ID" value="AEE76008.1"/>
    <property type="molecule type" value="Genomic_DNA"/>
</dbReference>
<dbReference type="EMBL" id="CP002686">
    <property type="protein sequence ID" value="AEE76009.1"/>
    <property type="molecule type" value="Genomic_DNA"/>
</dbReference>
<dbReference type="EMBL" id="AY062486">
    <property type="protein sequence ID" value="AAL32564.1"/>
    <property type="molecule type" value="mRNA"/>
</dbReference>
<dbReference type="EMBL" id="AY093276">
    <property type="protein sequence ID" value="AAM13275.1"/>
    <property type="molecule type" value="mRNA"/>
</dbReference>
<dbReference type="EMBL" id="AY099554">
    <property type="protein sequence ID" value="AAM20406.1"/>
    <property type="molecule type" value="mRNA"/>
</dbReference>
<dbReference type="EMBL" id="AK221063">
    <property type="protein sequence ID" value="BAD94862.1"/>
    <property type="status" value="ALT_INIT"/>
    <property type="molecule type" value="mRNA"/>
</dbReference>
<dbReference type="EMBL" id="AK229485">
    <property type="protein sequence ID" value="BAF01343.1"/>
    <property type="molecule type" value="mRNA"/>
</dbReference>
<dbReference type="RefSeq" id="NP_001078173.1">
    <molecule id="Q9LVJ0-2"/>
    <property type="nucleotide sequence ID" value="NM_001084704.1"/>
</dbReference>
<dbReference type="RefSeq" id="NP_566588.1">
    <molecule id="Q9LVJ0-1"/>
    <property type="nucleotide sequence ID" value="NM_112661.3"/>
</dbReference>
<dbReference type="SMR" id="Q9LVJ0"/>
<dbReference type="FunCoup" id="Q9LVJ0">
    <property type="interactions" value="339"/>
</dbReference>
<dbReference type="STRING" id="3702.Q9LVJ0"/>
<dbReference type="PaxDb" id="3702-AT3G17800.2"/>
<dbReference type="ProteomicsDB" id="228565">
    <molecule id="Q9LVJ0-1"/>
</dbReference>
<dbReference type="EnsemblPlants" id="AT3G17800.1">
    <molecule id="Q9LVJ0-1"/>
    <property type="protein sequence ID" value="AT3G17800.1"/>
    <property type="gene ID" value="AT3G17800"/>
</dbReference>
<dbReference type="EnsemblPlants" id="AT3G17800.2">
    <molecule id="Q9LVJ0-2"/>
    <property type="protein sequence ID" value="AT3G17800.2"/>
    <property type="gene ID" value="AT3G17800"/>
</dbReference>
<dbReference type="GeneID" id="821048"/>
<dbReference type="Gramene" id="AT3G17800.1">
    <molecule id="Q9LVJ0-1"/>
    <property type="protein sequence ID" value="AT3G17800.1"/>
    <property type="gene ID" value="AT3G17800"/>
</dbReference>
<dbReference type="Gramene" id="AT3G17800.2">
    <molecule id="Q9LVJ0-2"/>
    <property type="protein sequence ID" value="AT3G17800.2"/>
    <property type="gene ID" value="AT3G17800"/>
</dbReference>
<dbReference type="KEGG" id="ath:AT3G17800"/>
<dbReference type="Araport" id="AT3G17800"/>
<dbReference type="TAIR" id="AT3G17800"/>
<dbReference type="eggNOG" id="ENOG502QQTM">
    <property type="taxonomic scope" value="Eukaryota"/>
</dbReference>
<dbReference type="HOGENOM" id="CLU_041607_0_0_1"/>
<dbReference type="InParanoid" id="Q9LVJ0"/>
<dbReference type="OMA" id="FVDTRYH"/>
<dbReference type="PhylomeDB" id="Q9LVJ0"/>
<dbReference type="PRO" id="PR:Q9LVJ0"/>
<dbReference type="Proteomes" id="UP000006548">
    <property type="component" value="Chromosome 3"/>
</dbReference>
<dbReference type="ExpressionAtlas" id="Q9LVJ0">
    <property type="expression patterns" value="baseline and differential"/>
</dbReference>
<dbReference type="GO" id="GO:0009507">
    <property type="term" value="C:chloroplast"/>
    <property type="evidence" value="ECO:0007669"/>
    <property type="project" value="UniProtKB-SubCell"/>
</dbReference>
<dbReference type="GO" id="GO:0010193">
    <property type="term" value="P:response to ozone"/>
    <property type="evidence" value="ECO:0000270"/>
    <property type="project" value="UniProtKB"/>
</dbReference>
<dbReference type="GO" id="GO:0010224">
    <property type="term" value="P:response to UV-B"/>
    <property type="evidence" value="ECO:0000316"/>
    <property type="project" value="TAIR"/>
</dbReference>
<dbReference type="GO" id="GO:0009611">
    <property type="term" value="P:response to wounding"/>
    <property type="evidence" value="ECO:0000270"/>
    <property type="project" value="UniProtKB"/>
</dbReference>
<dbReference type="InterPro" id="IPR038925">
    <property type="entry name" value="At3g17800-like"/>
</dbReference>
<dbReference type="InterPro" id="IPR008479">
    <property type="entry name" value="DUF760"/>
</dbReference>
<dbReference type="PANTHER" id="PTHR31808">
    <property type="entry name" value="EXPRESSED PROTEIN"/>
    <property type="match status" value="1"/>
</dbReference>
<dbReference type="PANTHER" id="PTHR31808:SF13">
    <property type="entry name" value="UV-B-INDUCED PROTEIN"/>
    <property type="match status" value="1"/>
</dbReference>
<dbReference type="Pfam" id="PF05542">
    <property type="entry name" value="DUF760"/>
    <property type="match status" value="1"/>
</dbReference>
<organism evidence="9">
    <name type="scientific">Arabidopsis thaliana</name>
    <name type="common">Mouse-ear cress</name>
    <dbReference type="NCBI Taxonomy" id="3702"/>
    <lineage>
        <taxon>Eukaryota</taxon>
        <taxon>Viridiplantae</taxon>
        <taxon>Streptophyta</taxon>
        <taxon>Embryophyta</taxon>
        <taxon>Tracheophyta</taxon>
        <taxon>Spermatophyta</taxon>
        <taxon>Magnoliopsida</taxon>
        <taxon>eudicotyledons</taxon>
        <taxon>Gunneridae</taxon>
        <taxon>Pentapetalae</taxon>
        <taxon>rosids</taxon>
        <taxon>malvids</taxon>
        <taxon>Brassicales</taxon>
        <taxon>Brassicaceae</taxon>
        <taxon>Camelineae</taxon>
        <taxon>Arabidopsis</taxon>
    </lineage>
</organism>
<accession>Q9LVJ0</accession>
<accession>F4J6F0</accession>
<accession>Q0WNF6</accession>
<accession>Q56ZA5</accession>
<accession>Q8W4L9</accession>
<sequence length="421" mass="46067">MDALTSSLVRSPIVPSRTSDNGSGSMFLTASGPGFTRSGSSRLQLRLRQNASARSSRSLQSLTTTAKTRRSFVVRASSASNDASSGSSPKPIAPLQLQSPAGQFLSQILVSHPHLVPAAVEQQLEQLQTDRDSQGQNKDSASVPGTDIVLYRRIAELKENERRRTLEEILYALVVQKFMEANVSLVPSVSPSSDPSGRVDTWPTKVEKLERLHSPEMYEMIHNHLALILGSRMGDLNSVAQISKLRVGQVYAASVMYGYFLKRVDQRFQLEKTMKILPGGSDESKTSVEQAEGTATYQAAVSSHPEVGAFAGGVSAKGFGSEIKPSRLRSYVMSFDAETLQRYATIRSREAVGIIEKHTEALFGKPEIVITPEGTVDSSKDEQIKISFGGMKRLVLEAVTFGSFLWDVESHVDARYHFVLN</sequence>
<proteinExistence type="evidence at transcript level"/>
<comment type="subcellular location">
    <subcellularLocation>
        <location evidence="1">Plastid</location>
        <location evidence="1">Chloroplast</location>
    </subcellularLocation>
</comment>
<comment type="alternative products">
    <event type="alternative splicing"/>
    <isoform>
        <id>Q9LVJ0-1</id>
        <name>1</name>
        <sequence type="displayed"/>
    </isoform>
    <isoform>
        <id>Q9LVJ0-2</id>
        <name>2</name>
        <sequence type="described" ref="VSP_057944"/>
    </isoform>
</comment>
<comment type="induction">
    <text evidence="3 4 5">Induced transiently by UV-B, ozone and wounding.</text>
</comment>
<comment type="sequence caution" evidence="6">
    <conflict type="erroneous initiation">
        <sequence resource="EMBL-CDS" id="BAD94862"/>
    </conflict>
    <text>Truncated N-terminus.</text>
</comment>
<reference key="1">
    <citation type="journal article" date="2000" name="DNA Res.">
        <title>Structural analysis of Arabidopsis thaliana chromosome 3. I. Sequence features of the regions of 4,504,864 bp covered by sixty P1 and TAC clones.</title>
        <authorList>
            <person name="Sato S."/>
            <person name="Nakamura Y."/>
            <person name="Kaneko T."/>
            <person name="Katoh T."/>
            <person name="Asamizu E."/>
            <person name="Tabata S."/>
        </authorList>
    </citation>
    <scope>NUCLEOTIDE SEQUENCE [LARGE SCALE GENOMIC DNA]</scope>
    <source>
        <strain>cv. Columbia</strain>
    </source>
</reference>
<reference key="2">
    <citation type="journal article" date="2017" name="Plant J.">
        <title>Araport11: a complete reannotation of the Arabidopsis thaliana reference genome.</title>
        <authorList>
            <person name="Cheng C.Y."/>
            <person name="Krishnakumar V."/>
            <person name="Chan A.P."/>
            <person name="Thibaud-Nissen F."/>
            <person name="Schobel S."/>
            <person name="Town C.D."/>
        </authorList>
    </citation>
    <scope>GENOME REANNOTATION</scope>
    <source>
        <strain>cv. Columbia</strain>
    </source>
</reference>
<reference key="3">
    <citation type="journal article" date="2003" name="Science">
        <title>Empirical analysis of transcriptional activity in the Arabidopsis genome.</title>
        <authorList>
            <person name="Yamada K."/>
            <person name="Lim J."/>
            <person name="Dale J.M."/>
            <person name="Chen H."/>
            <person name="Shinn P."/>
            <person name="Palm C.J."/>
            <person name="Southwick A.M."/>
            <person name="Wu H.C."/>
            <person name="Kim C.J."/>
            <person name="Nguyen M."/>
            <person name="Pham P.K."/>
            <person name="Cheuk R.F."/>
            <person name="Karlin-Newmann G."/>
            <person name="Liu S.X."/>
            <person name="Lam B."/>
            <person name="Sakano H."/>
            <person name="Wu T."/>
            <person name="Yu G."/>
            <person name="Miranda M."/>
            <person name="Quach H.L."/>
            <person name="Tripp M."/>
            <person name="Chang C.H."/>
            <person name="Lee J.M."/>
            <person name="Toriumi M.J."/>
            <person name="Chan M.M."/>
            <person name="Tang C.C."/>
            <person name="Onodera C.S."/>
            <person name="Deng J.M."/>
            <person name="Akiyama K."/>
            <person name="Ansari Y."/>
            <person name="Arakawa T."/>
            <person name="Banh J."/>
            <person name="Banno F."/>
            <person name="Bowser L."/>
            <person name="Brooks S.Y."/>
            <person name="Carninci P."/>
            <person name="Chao Q."/>
            <person name="Choy N."/>
            <person name="Enju A."/>
            <person name="Goldsmith A.D."/>
            <person name="Gurjal M."/>
            <person name="Hansen N.F."/>
            <person name="Hayashizaki Y."/>
            <person name="Johnson-Hopson C."/>
            <person name="Hsuan V.W."/>
            <person name="Iida K."/>
            <person name="Karnes M."/>
            <person name="Khan S."/>
            <person name="Koesema E."/>
            <person name="Ishida J."/>
            <person name="Jiang P.X."/>
            <person name="Jones T."/>
            <person name="Kawai J."/>
            <person name="Kamiya A."/>
            <person name="Meyers C."/>
            <person name="Nakajima M."/>
            <person name="Narusaka M."/>
            <person name="Seki M."/>
            <person name="Sakurai T."/>
            <person name="Satou M."/>
            <person name="Tamse R."/>
            <person name="Vaysberg M."/>
            <person name="Wallender E.K."/>
            <person name="Wong C."/>
            <person name="Yamamura Y."/>
            <person name="Yuan S."/>
            <person name="Shinozaki K."/>
            <person name="Davis R.W."/>
            <person name="Theologis A."/>
            <person name="Ecker J.R."/>
        </authorList>
    </citation>
    <scope>NUCLEOTIDE SEQUENCE [LARGE SCALE MRNA] (ISOFORM 1)</scope>
    <source>
        <strain>cv. Columbia</strain>
    </source>
</reference>
<reference key="4">
    <citation type="submission" date="2006-07" db="EMBL/GenBank/DDBJ databases">
        <title>Large-scale analysis of RIKEN Arabidopsis full-length (RAFL) cDNAs.</title>
        <authorList>
            <person name="Totoki Y."/>
            <person name="Seki M."/>
            <person name="Ishida J."/>
            <person name="Nakajima M."/>
            <person name="Enju A."/>
            <person name="Kamiya A."/>
            <person name="Narusaka M."/>
            <person name="Shin-i T."/>
            <person name="Nakagawa M."/>
            <person name="Sakamoto N."/>
            <person name="Oishi K."/>
            <person name="Kohara Y."/>
            <person name="Kobayashi M."/>
            <person name="Toyoda A."/>
            <person name="Sakaki Y."/>
            <person name="Sakurai T."/>
            <person name="Iida K."/>
            <person name="Akiyama K."/>
            <person name="Satou M."/>
            <person name="Toyoda T."/>
            <person name="Konagaya A."/>
            <person name="Carninci P."/>
            <person name="Kawai J."/>
            <person name="Hayashizaki Y."/>
            <person name="Shinozaki K."/>
        </authorList>
    </citation>
    <scope>NUCLEOTIDE SEQUENCE [LARGE SCALE MRNA] (ISOFORM 1)</scope>
    <source>
        <strain>cv. Columbia</strain>
    </source>
</reference>
<reference key="5">
    <citation type="journal article" date="2002" name="Photochem. Photobiol. Sci.">
        <title>Gene regulation by low level UV-B radiation: identification by DNA array analysis.</title>
        <authorList>
            <person name="Brosche M."/>
            <person name="Schuler M.A."/>
            <person name="Kalbina I."/>
            <person name="Connor L."/>
            <person name="Strid A."/>
        </authorList>
    </citation>
    <scope>INDUCTION BY OZONE; UV-B AND WOUNDING</scope>
    <source>
        <strain>cv. Columbia</strain>
    </source>
</reference>
<reference key="6">
    <citation type="journal article" date="2004" name="Plant Physiol. Biochem.">
        <title>Ultraviolet-B signalling: Arabidopsis brassinosteroid mutants are defective in UV-B regulated defence gene expression.</title>
        <authorList>
            <person name="Saevenstrand H."/>
            <person name="Brosche M."/>
            <person name="Strid A."/>
        </authorList>
    </citation>
    <scope>INDUCTION BY UV-B</scope>
    <source>
        <strain>cv. Columbia</strain>
    </source>
</reference>
<reference key="7">
    <citation type="journal article" date="2006" name="Plant Cell Environ.">
        <title>The role of NADPH oxidase and MAP kinase phosphatase in UV-B-dependent gene expression in Arabidopsis.</title>
        <authorList>
            <person name="Kalbina I."/>
            <person name="Strid A."/>
        </authorList>
    </citation>
    <scope>INDUCTION BY UV-B</scope>
    <source>
        <strain>cv. Columbia</strain>
    </source>
</reference>